<feature type="chain" id="PRO_1000085165" description="Chaperone protein DnaJ">
    <location>
        <begin position="1"/>
        <end position="378"/>
    </location>
</feature>
<feature type="domain" description="J" evidence="1">
    <location>
        <begin position="5"/>
        <end position="70"/>
    </location>
</feature>
<feature type="repeat" description="CXXCXGXG motif">
    <location>
        <begin position="151"/>
        <end position="158"/>
    </location>
</feature>
<feature type="repeat" description="CXXCXGXG motif">
    <location>
        <begin position="168"/>
        <end position="175"/>
    </location>
</feature>
<feature type="repeat" description="CXXCXGXG motif">
    <location>
        <begin position="190"/>
        <end position="197"/>
    </location>
</feature>
<feature type="repeat" description="CXXCXGXG motif">
    <location>
        <begin position="204"/>
        <end position="211"/>
    </location>
</feature>
<feature type="zinc finger region" description="CR-type" evidence="1">
    <location>
        <begin position="138"/>
        <end position="216"/>
    </location>
</feature>
<feature type="binding site" evidence="1">
    <location>
        <position position="151"/>
    </location>
    <ligand>
        <name>Zn(2+)</name>
        <dbReference type="ChEBI" id="CHEBI:29105"/>
        <label>1</label>
    </ligand>
</feature>
<feature type="binding site" evidence="1">
    <location>
        <position position="154"/>
    </location>
    <ligand>
        <name>Zn(2+)</name>
        <dbReference type="ChEBI" id="CHEBI:29105"/>
        <label>1</label>
    </ligand>
</feature>
<feature type="binding site" evidence="1">
    <location>
        <position position="168"/>
    </location>
    <ligand>
        <name>Zn(2+)</name>
        <dbReference type="ChEBI" id="CHEBI:29105"/>
        <label>2</label>
    </ligand>
</feature>
<feature type="binding site" evidence="1">
    <location>
        <position position="171"/>
    </location>
    <ligand>
        <name>Zn(2+)</name>
        <dbReference type="ChEBI" id="CHEBI:29105"/>
        <label>2</label>
    </ligand>
</feature>
<feature type="binding site" evidence="1">
    <location>
        <position position="190"/>
    </location>
    <ligand>
        <name>Zn(2+)</name>
        <dbReference type="ChEBI" id="CHEBI:29105"/>
        <label>2</label>
    </ligand>
</feature>
<feature type="binding site" evidence="1">
    <location>
        <position position="193"/>
    </location>
    <ligand>
        <name>Zn(2+)</name>
        <dbReference type="ChEBI" id="CHEBI:29105"/>
        <label>2</label>
    </ligand>
</feature>
<feature type="binding site" evidence="1">
    <location>
        <position position="204"/>
    </location>
    <ligand>
        <name>Zn(2+)</name>
        <dbReference type="ChEBI" id="CHEBI:29105"/>
        <label>1</label>
    </ligand>
</feature>
<feature type="binding site" evidence="1">
    <location>
        <position position="207"/>
    </location>
    <ligand>
        <name>Zn(2+)</name>
        <dbReference type="ChEBI" id="CHEBI:29105"/>
        <label>1</label>
    </ligand>
</feature>
<gene>
    <name evidence="1" type="primary">dnaJ</name>
    <name type="ordered locus">Bcep1808_0713</name>
</gene>
<organism>
    <name type="scientific">Burkholderia vietnamiensis (strain G4 / LMG 22486)</name>
    <name type="common">Burkholderia cepacia (strain R1808)</name>
    <dbReference type="NCBI Taxonomy" id="269482"/>
    <lineage>
        <taxon>Bacteria</taxon>
        <taxon>Pseudomonadati</taxon>
        <taxon>Pseudomonadota</taxon>
        <taxon>Betaproteobacteria</taxon>
        <taxon>Burkholderiales</taxon>
        <taxon>Burkholderiaceae</taxon>
        <taxon>Burkholderia</taxon>
        <taxon>Burkholderia cepacia complex</taxon>
    </lineage>
</organism>
<reference key="1">
    <citation type="submission" date="2007-03" db="EMBL/GenBank/DDBJ databases">
        <title>Complete sequence of chromosome 1 of Burkholderia vietnamiensis G4.</title>
        <authorList>
            <consortium name="US DOE Joint Genome Institute"/>
            <person name="Copeland A."/>
            <person name="Lucas S."/>
            <person name="Lapidus A."/>
            <person name="Barry K."/>
            <person name="Detter J.C."/>
            <person name="Glavina del Rio T."/>
            <person name="Hammon N."/>
            <person name="Israni S."/>
            <person name="Dalin E."/>
            <person name="Tice H."/>
            <person name="Pitluck S."/>
            <person name="Chain P."/>
            <person name="Malfatti S."/>
            <person name="Shin M."/>
            <person name="Vergez L."/>
            <person name="Schmutz J."/>
            <person name="Larimer F."/>
            <person name="Land M."/>
            <person name="Hauser L."/>
            <person name="Kyrpides N."/>
            <person name="Tiedje J."/>
            <person name="Richardson P."/>
        </authorList>
    </citation>
    <scope>NUCLEOTIDE SEQUENCE [LARGE SCALE GENOMIC DNA]</scope>
    <source>
        <strain>G4 / LMG 22486</strain>
    </source>
</reference>
<name>DNAJ_BURVG</name>
<sequence>MAKRDYYEVLGVAKNASDDEIKKAYRKLAMKYHPDRNPDNKDAEEHFKEAKEAYEMLSDGQKRAAYDQYGHAGVDPNMAGAGGQGFGGFADAFGDIFGDIFGQAAGGAARGGRGGPQVYRGADLRYSMEITLEQAAHGYDTQIRVPSWVSCEVCHGSGAKPGTKPETCPTCHGQGTVRMSQGFFSIQQTCPKCHGTGTYIPEPCAHCHGSGKVKETKTLEVKIPAGIDDGMRIRSAGNGEPGINGGPPGDLYVEIHIKPHAVFERDGDDLHCQMPIPFTTAALGGEIEVPTLAGRASFPVPEGTQSGKTFRLRGKGIKGLRSSIAGDLYVHVQVETPVKLTDQQRDLLKQFEKSLAEGGARHSPQSKSWFDRMKSFFE</sequence>
<proteinExistence type="inferred from homology"/>
<dbReference type="EMBL" id="CP000614">
    <property type="protein sequence ID" value="ABO53725.1"/>
    <property type="molecule type" value="Genomic_DNA"/>
</dbReference>
<dbReference type="SMR" id="A4JBS2"/>
<dbReference type="KEGG" id="bvi:Bcep1808_0713"/>
<dbReference type="eggNOG" id="COG0484">
    <property type="taxonomic scope" value="Bacteria"/>
</dbReference>
<dbReference type="HOGENOM" id="CLU_017633_0_7_4"/>
<dbReference type="Proteomes" id="UP000002287">
    <property type="component" value="Chromosome 1"/>
</dbReference>
<dbReference type="GO" id="GO:0005737">
    <property type="term" value="C:cytoplasm"/>
    <property type="evidence" value="ECO:0007669"/>
    <property type="project" value="UniProtKB-SubCell"/>
</dbReference>
<dbReference type="GO" id="GO:0005524">
    <property type="term" value="F:ATP binding"/>
    <property type="evidence" value="ECO:0007669"/>
    <property type="project" value="InterPro"/>
</dbReference>
<dbReference type="GO" id="GO:0031072">
    <property type="term" value="F:heat shock protein binding"/>
    <property type="evidence" value="ECO:0007669"/>
    <property type="project" value="InterPro"/>
</dbReference>
<dbReference type="GO" id="GO:0051082">
    <property type="term" value="F:unfolded protein binding"/>
    <property type="evidence" value="ECO:0007669"/>
    <property type="project" value="UniProtKB-UniRule"/>
</dbReference>
<dbReference type="GO" id="GO:0008270">
    <property type="term" value="F:zinc ion binding"/>
    <property type="evidence" value="ECO:0007669"/>
    <property type="project" value="UniProtKB-UniRule"/>
</dbReference>
<dbReference type="GO" id="GO:0051085">
    <property type="term" value="P:chaperone cofactor-dependent protein refolding"/>
    <property type="evidence" value="ECO:0007669"/>
    <property type="project" value="TreeGrafter"/>
</dbReference>
<dbReference type="GO" id="GO:0006260">
    <property type="term" value="P:DNA replication"/>
    <property type="evidence" value="ECO:0007669"/>
    <property type="project" value="UniProtKB-KW"/>
</dbReference>
<dbReference type="GO" id="GO:0042026">
    <property type="term" value="P:protein refolding"/>
    <property type="evidence" value="ECO:0007669"/>
    <property type="project" value="TreeGrafter"/>
</dbReference>
<dbReference type="GO" id="GO:0009408">
    <property type="term" value="P:response to heat"/>
    <property type="evidence" value="ECO:0007669"/>
    <property type="project" value="InterPro"/>
</dbReference>
<dbReference type="CDD" id="cd06257">
    <property type="entry name" value="DnaJ"/>
    <property type="match status" value="1"/>
</dbReference>
<dbReference type="CDD" id="cd10747">
    <property type="entry name" value="DnaJ_C"/>
    <property type="match status" value="1"/>
</dbReference>
<dbReference type="CDD" id="cd10719">
    <property type="entry name" value="DnaJ_zf"/>
    <property type="match status" value="1"/>
</dbReference>
<dbReference type="FunFam" id="1.10.287.110:FF:000031">
    <property type="entry name" value="Molecular chaperone DnaJ"/>
    <property type="match status" value="1"/>
</dbReference>
<dbReference type="FunFam" id="2.10.230.10:FF:000002">
    <property type="entry name" value="Molecular chaperone DnaJ"/>
    <property type="match status" value="1"/>
</dbReference>
<dbReference type="FunFam" id="2.60.260.20:FF:000004">
    <property type="entry name" value="Molecular chaperone DnaJ"/>
    <property type="match status" value="1"/>
</dbReference>
<dbReference type="Gene3D" id="1.10.287.110">
    <property type="entry name" value="DnaJ domain"/>
    <property type="match status" value="1"/>
</dbReference>
<dbReference type="Gene3D" id="2.10.230.10">
    <property type="entry name" value="Heat shock protein DnaJ, cysteine-rich domain"/>
    <property type="match status" value="1"/>
</dbReference>
<dbReference type="Gene3D" id="2.60.260.20">
    <property type="entry name" value="Urease metallochaperone UreE, N-terminal domain"/>
    <property type="match status" value="2"/>
</dbReference>
<dbReference type="HAMAP" id="MF_01152">
    <property type="entry name" value="DnaJ"/>
    <property type="match status" value="1"/>
</dbReference>
<dbReference type="InterPro" id="IPR012724">
    <property type="entry name" value="DnaJ"/>
</dbReference>
<dbReference type="InterPro" id="IPR002939">
    <property type="entry name" value="DnaJ_C"/>
</dbReference>
<dbReference type="InterPro" id="IPR001623">
    <property type="entry name" value="DnaJ_domain"/>
</dbReference>
<dbReference type="InterPro" id="IPR018253">
    <property type="entry name" value="DnaJ_domain_CS"/>
</dbReference>
<dbReference type="InterPro" id="IPR008971">
    <property type="entry name" value="HSP40/DnaJ_pept-bd"/>
</dbReference>
<dbReference type="InterPro" id="IPR001305">
    <property type="entry name" value="HSP_DnaJ_Cys-rich_dom"/>
</dbReference>
<dbReference type="InterPro" id="IPR036410">
    <property type="entry name" value="HSP_DnaJ_Cys-rich_dom_sf"/>
</dbReference>
<dbReference type="InterPro" id="IPR036869">
    <property type="entry name" value="J_dom_sf"/>
</dbReference>
<dbReference type="NCBIfam" id="TIGR02349">
    <property type="entry name" value="DnaJ_bact"/>
    <property type="match status" value="1"/>
</dbReference>
<dbReference type="NCBIfam" id="NF008035">
    <property type="entry name" value="PRK10767.1"/>
    <property type="match status" value="1"/>
</dbReference>
<dbReference type="PANTHER" id="PTHR43096:SF48">
    <property type="entry name" value="CHAPERONE PROTEIN DNAJ"/>
    <property type="match status" value="1"/>
</dbReference>
<dbReference type="PANTHER" id="PTHR43096">
    <property type="entry name" value="DNAJ HOMOLOG 1, MITOCHONDRIAL-RELATED"/>
    <property type="match status" value="1"/>
</dbReference>
<dbReference type="Pfam" id="PF00226">
    <property type="entry name" value="DnaJ"/>
    <property type="match status" value="1"/>
</dbReference>
<dbReference type="Pfam" id="PF01556">
    <property type="entry name" value="DnaJ_C"/>
    <property type="match status" value="1"/>
</dbReference>
<dbReference type="Pfam" id="PF00684">
    <property type="entry name" value="DnaJ_CXXCXGXG"/>
    <property type="match status" value="1"/>
</dbReference>
<dbReference type="PRINTS" id="PR00625">
    <property type="entry name" value="JDOMAIN"/>
</dbReference>
<dbReference type="SMART" id="SM00271">
    <property type="entry name" value="DnaJ"/>
    <property type="match status" value="1"/>
</dbReference>
<dbReference type="SUPFAM" id="SSF46565">
    <property type="entry name" value="Chaperone J-domain"/>
    <property type="match status" value="1"/>
</dbReference>
<dbReference type="SUPFAM" id="SSF57938">
    <property type="entry name" value="DnaJ/Hsp40 cysteine-rich domain"/>
    <property type="match status" value="1"/>
</dbReference>
<dbReference type="SUPFAM" id="SSF49493">
    <property type="entry name" value="HSP40/DnaJ peptide-binding domain"/>
    <property type="match status" value="2"/>
</dbReference>
<dbReference type="PROSITE" id="PS00636">
    <property type="entry name" value="DNAJ_1"/>
    <property type="match status" value="1"/>
</dbReference>
<dbReference type="PROSITE" id="PS50076">
    <property type="entry name" value="DNAJ_2"/>
    <property type="match status" value="1"/>
</dbReference>
<dbReference type="PROSITE" id="PS51188">
    <property type="entry name" value="ZF_CR"/>
    <property type="match status" value="1"/>
</dbReference>
<keyword id="KW-0143">Chaperone</keyword>
<keyword id="KW-0963">Cytoplasm</keyword>
<keyword id="KW-0235">DNA replication</keyword>
<keyword id="KW-0479">Metal-binding</keyword>
<keyword id="KW-0677">Repeat</keyword>
<keyword id="KW-0346">Stress response</keyword>
<keyword id="KW-0862">Zinc</keyword>
<keyword id="KW-0863">Zinc-finger</keyword>
<evidence type="ECO:0000255" key="1">
    <source>
        <dbReference type="HAMAP-Rule" id="MF_01152"/>
    </source>
</evidence>
<protein>
    <recommendedName>
        <fullName evidence="1">Chaperone protein DnaJ</fullName>
    </recommendedName>
</protein>
<comment type="function">
    <text evidence="1">Participates actively in the response to hyperosmotic and heat shock by preventing the aggregation of stress-denatured proteins and by disaggregating proteins, also in an autonomous, DnaK-independent fashion. Unfolded proteins bind initially to DnaJ; upon interaction with the DnaJ-bound protein, DnaK hydrolyzes its bound ATP, resulting in the formation of a stable complex. GrpE releases ADP from DnaK; ATP binding to DnaK triggers the release of the substrate protein, thus completing the reaction cycle. Several rounds of ATP-dependent interactions between DnaJ, DnaK and GrpE are required for fully efficient folding. Also involved, together with DnaK and GrpE, in the DNA replication of plasmids through activation of initiation proteins.</text>
</comment>
<comment type="cofactor">
    <cofactor evidence="1">
        <name>Zn(2+)</name>
        <dbReference type="ChEBI" id="CHEBI:29105"/>
    </cofactor>
    <text evidence="1">Binds 2 Zn(2+) ions per monomer.</text>
</comment>
<comment type="subunit">
    <text evidence="1">Homodimer.</text>
</comment>
<comment type="subcellular location">
    <subcellularLocation>
        <location evidence="1">Cytoplasm</location>
    </subcellularLocation>
</comment>
<comment type="domain">
    <text evidence="1">The J domain is necessary and sufficient to stimulate DnaK ATPase activity. Zinc center 1 plays an important role in the autonomous, DnaK-independent chaperone activity of DnaJ. Zinc center 2 is essential for interaction with DnaK and for DnaJ activity.</text>
</comment>
<comment type="similarity">
    <text evidence="1">Belongs to the DnaJ family.</text>
</comment>
<accession>A4JBS2</accession>